<organism>
    <name type="scientific">Escherichia coli O45:K1 (strain S88 / ExPEC)</name>
    <dbReference type="NCBI Taxonomy" id="585035"/>
    <lineage>
        <taxon>Bacteria</taxon>
        <taxon>Pseudomonadati</taxon>
        <taxon>Pseudomonadota</taxon>
        <taxon>Gammaproteobacteria</taxon>
        <taxon>Enterobacterales</taxon>
        <taxon>Enterobacteriaceae</taxon>
        <taxon>Escherichia</taxon>
    </lineage>
</organism>
<gene>
    <name evidence="1" type="primary">mukB</name>
    <name type="ordered locus">ECS88_0952</name>
</gene>
<keyword id="KW-0067">ATP-binding</keyword>
<keyword id="KW-0131">Cell cycle</keyword>
<keyword id="KW-0132">Cell division</keyword>
<keyword id="KW-0159">Chromosome partition</keyword>
<keyword id="KW-0175">Coiled coil</keyword>
<keyword id="KW-0963">Cytoplasm</keyword>
<keyword id="KW-0226">DNA condensation</keyword>
<keyword id="KW-0238">DNA-binding</keyword>
<keyword id="KW-0547">Nucleotide-binding</keyword>
<keyword id="KW-1185">Reference proteome</keyword>
<comment type="function">
    <text evidence="1">Plays a central role in chromosome condensation, segregation and cell cycle progression. Functions as a homodimer, which is essential for chromosome partition. Involved in negative DNA supercoiling in vivo, and by this means organize and compact chromosomes. May achieve or facilitate chromosome segregation by condensation DNA from both sides of a centrally located replisome during cell division.</text>
</comment>
<comment type="subunit">
    <text evidence="1">Homodimerization via its hinge domain. Binds to DNA via its C-terminal region. Interacts, and probably forms a ternary complex, with MukE and MukF via its C-terminal region. The complex formation is stimulated by calcium or magnesium. Interacts with tubulin-related protein FtsZ.</text>
</comment>
<comment type="subcellular location">
    <subcellularLocation>
        <location evidence="1">Cytoplasm</location>
        <location evidence="1">Nucleoid</location>
    </subcellularLocation>
    <text evidence="1">Restricted to the nucleoid region.</text>
</comment>
<comment type="domain">
    <text evidence="1">The hinge domain, which separates the large intramolecular coiled coil regions, allows the homodimerization, forming a V-shaped homodimer.</text>
</comment>
<comment type="similarity">
    <text evidence="1">Belongs to the SMC family. MukB subfamily.</text>
</comment>
<dbReference type="EMBL" id="CU928161">
    <property type="protein sequence ID" value="CAR02284.1"/>
    <property type="molecule type" value="Genomic_DNA"/>
</dbReference>
<dbReference type="RefSeq" id="WP_000572616.1">
    <property type="nucleotide sequence ID" value="NC_011742.1"/>
</dbReference>
<dbReference type="SMR" id="B7MHN3"/>
<dbReference type="KEGG" id="ecz:ECS88_0952"/>
<dbReference type="HOGENOM" id="CLU_004430_0_0_6"/>
<dbReference type="Proteomes" id="UP000000747">
    <property type="component" value="Chromosome"/>
</dbReference>
<dbReference type="GO" id="GO:0005737">
    <property type="term" value="C:cytoplasm"/>
    <property type="evidence" value="ECO:0007669"/>
    <property type="project" value="UniProtKB-UniRule"/>
</dbReference>
<dbReference type="GO" id="GO:0009295">
    <property type="term" value="C:nucleoid"/>
    <property type="evidence" value="ECO:0007669"/>
    <property type="project" value="UniProtKB-SubCell"/>
</dbReference>
<dbReference type="GO" id="GO:0005524">
    <property type="term" value="F:ATP binding"/>
    <property type="evidence" value="ECO:0007669"/>
    <property type="project" value="UniProtKB-UniRule"/>
</dbReference>
<dbReference type="GO" id="GO:0003677">
    <property type="term" value="F:DNA binding"/>
    <property type="evidence" value="ECO:0007669"/>
    <property type="project" value="UniProtKB-UniRule"/>
</dbReference>
<dbReference type="GO" id="GO:0051301">
    <property type="term" value="P:cell division"/>
    <property type="evidence" value="ECO:0007669"/>
    <property type="project" value="UniProtKB-KW"/>
</dbReference>
<dbReference type="GO" id="GO:0030261">
    <property type="term" value="P:chromosome condensation"/>
    <property type="evidence" value="ECO:0007669"/>
    <property type="project" value="UniProtKB-KW"/>
</dbReference>
<dbReference type="GO" id="GO:0007059">
    <property type="term" value="P:chromosome segregation"/>
    <property type="evidence" value="ECO:0007669"/>
    <property type="project" value="UniProtKB-UniRule"/>
</dbReference>
<dbReference type="GO" id="GO:0006260">
    <property type="term" value="P:DNA replication"/>
    <property type="evidence" value="ECO:0007669"/>
    <property type="project" value="UniProtKB-UniRule"/>
</dbReference>
<dbReference type="FunFam" id="1.20.58.850:FF:000001">
    <property type="entry name" value="Chromosome partition protein MukB"/>
    <property type="match status" value="1"/>
</dbReference>
<dbReference type="FunFam" id="3.30.70.3500:FF:000001">
    <property type="entry name" value="Chromosome partition protein MukB"/>
    <property type="match status" value="1"/>
</dbReference>
<dbReference type="FunFam" id="3.40.1140.10:FF:000001">
    <property type="entry name" value="Chromosome partition protein MukB"/>
    <property type="match status" value="1"/>
</dbReference>
<dbReference type="FunFam" id="3.40.1140.10:FF:000002">
    <property type="entry name" value="Chromosome partition protein MukB"/>
    <property type="match status" value="1"/>
</dbReference>
<dbReference type="Gene3D" id="1.10.287.1490">
    <property type="match status" value="1"/>
</dbReference>
<dbReference type="Gene3D" id="1.20.58.850">
    <property type="match status" value="1"/>
</dbReference>
<dbReference type="Gene3D" id="3.40.1140.10">
    <property type="match status" value="2"/>
</dbReference>
<dbReference type="Gene3D" id="1.20.5.420">
    <property type="entry name" value="Immunoglobulin FC, subunit C"/>
    <property type="match status" value="1"/>
</dbReference>
<dbReference type="Gene3D" id="3.30.70.3500">
    <property type="entry name" value="MukB, hinge domain"/>
    <property type="match status" value="1"/>
</dbReference>
<dbReference type="HAMAP" id="MF_01800">
    <property type="entry name" value="MukB"/>
    <property type="match status" value="1"/>
</dbReference>
<dbReference type="InterPro" id="IPR012090">
    <property type="entry name" value="MukB"/>
</dbReference>
<dbReference type="InterPro" id="IPR050308">
    <property type="entry name" value="MukB/SMC"/>
</dbReference>
<dbReference type="InterPro" id="IPR032520">
    <property type="entry name" value="MukB_hinge"/>
</dbReference>
<dbReference type="InterPro" id="IPR042501">
    <property type="entry name" value="MukB_hinge_sf"/>
</dbReference>
<dbReference type="InterPro" id="IPR007406">
    <property type="entry name" value="MukB_N_dom"/>
</dbReference>
<dbReference type="InterPro" id="IPR027417">
    <property type="entry name" value="P-loop_NTPase"/>
</dbReference>
<dbReference type="NCBIfam" id="NF003422">
    <property type="entry name" value="PRK04863.1"/>
    <property type="match status" value="1"/>
</dbReference>
<dbReference type="PANTHER" id="PTHR42963">
    <property type="entry name" value="CHROMOSOME PARTITION PROTEIN MUKB"/>
    <property type="match status" value="1"/>
</dbReference>
<dbReference type="PANTHER" id="PTHR42963:SF1">
    <property type="entry name" value="DUF4476 DOMAIN-CONTAINING PROTEIN"/>
    <property type="match status" value="1"/>
</dbReference>
<dbReference type="Pfam" id="PF04310">
    <property type="entry name" value="MukB"/>
    <property type="match status" value="1"/>
</dbReference>
<dbReference type="Pfam" id="PF16330">
    <property type="entry name" value="MukB_hinge"/>
    <property type="match status" value="1"/>
</dbReference>
<dbReference type="Pfam" id="PF13558">
    <property type="entry name" value="SbcC_Walker_B"/>
    <property type="match status" value="1"/>
</dbReference>
<dbReference type="PIRSF" id="PIRSF005246">
    <property type="entry name" value="MukB"/>
    <property type="match status" value="1"/>
</dbReference>
<dbReference type="SUPFAM" id="SSF52540">
    <property type="entry name" value="P-loop containing nucleoside triphosphate hydrolases"/>
    <property type="match status" value="2"/>
</dbReference>
<name>MUKB_ECO45</name>
<accession>B7MHN3</accession>
<proteinExistence type="inferred from homology"/>
<evidence type="ECO:0000255" key="1">
    <source>
        <dbReference type="HAMAP-Rule" id="MF_01800"/>
    </source>
</evidence>
<feature type="chain" id="PRO_1000187467" description="Chromosome partition protein MukB">
    <location>
        <begin position="1"/>
        <end position="1486"/>
    </location>
</feature>
<feature type="region of interest" description="Flexible hinge" evidence="1">
    <location>
        <begin position="666"/>
        <end position="783"/>
    </location>
</feature>
<feature type="coiled-coil region" evidence="1">
    <location>
        <begin position="326"/>
        <end position="418"/>
    </location>
</feature>
<feature type="coiled-coil region" evidence="1">
    <location>
        <begin position="444"/>
        <end position="480"/>
    </location>
</feature>
<feature type="coiled-coil region" evidence="1">
    <location>
        <begin position="509"/>
        <end position="603"/>
    </location>
</feature>
<feature type="coiled-coil region" evidence="1">
    <location>
        <begin position="835"/>
        <end position="923"/>
    </location>
</feature>
<feature type="coiled-coil region" evidence="1">
    <location>
        <begin position="977"/>
        <end position="1115"/>
    </location>
</feature>
<feature type="coiled-coil region" evidence="1">
    <location>
        <begin position="1209"/>
        <end position="1266"/>
    </location>
</feature>
<feature type="binding site" evidence="1">
    <location>
        <begin position="34"/>
        <end position="41"/>
    </location>
    <ligand>
        <name>ATP</name>
        <dbReference type="ChEBI" id="CHEBI:30616"/>
    </ligand>
</feature>
<sequence length="1486" mass="170193">MIERGKFRSLTLINWNGFFARTFDLDELVTTLSGGNGAGKSTTMAAFVTALIPDLTLLHFRNTTEAGATSGSRDKGLHGKLKAGVCYSMLDTINSHHQRVVVGVRLQQVAGRDRKVDIKPFAIQGLPMSVQPTQLVTETLNERQARVLPLNELKDKLEAMEGVQFKQFNSITDYHSLMFDLGIIARRLRSASDRSKFYRLIEASLYGGISSAITRSLRDYLLPENSGVRKAFQDMEAALRENRMTLEAIRVTQSDRDLFKHLISEATNYVAADYMRHANERRVHLDKALEFRRELHTSRKQLAAEQYKHVDMARELAEHNGAEGDLEADYQAASDHLNLVQTALRQQEKIERYEADLDELQIRLEEQNEVVAEAIERQEENEARAEAAELEVDELKSQLADYQQALDVQQTRAIQYNQAIAALNRAKELCHLPDLTADSAAEWLETFQAKELEATEKMLSLEQKMSMAQTAHSQFEQAYQLVVAINGPLARNEAWDVARELLREGVDQRHLAEQVQPLRMRLSELEQRLREQQEAERLLADFCKRQGKNFDIDELEALHQELEARIASLSDSVSNAREERMALRQEQEQLQSRIQSLMQRAPVWLAAQNSLNQLSEQCGEEFTSSQDVTEFLQQLLEREREAIVERDEVGARKNAVDEEIERLSQPGGSEDQRLNALAERFGGVLLSEIYDDVSLEDAPYFSALYGPSRHAIVVPDLSQVTEHLEGLTDCPEDLYLIEGDPQSFDDSVFSVDELEKAVVVKIADRQWRYSRFPEVPLFGRAARESRIESLHAEREVLSERFATLSFDVQKTQRLHQAFSRFIGSHLAVAFESDPEAEIRQLNSRRVELERALSNHENDNQQQRIQFEQAKEGVTALNRILPRLNLLADDSLADRVDEIRERLDEAQEAARFVQQFGNQLAKLEPIVSVLQSDPEQFEQLKEDYAYSQQMQRDARQQAFALTEVVQRRAHFSYSDSAEMLSGNSDLNEKLRERLEQAEAERTRAREALRGHAAQLNQYNQVLASLKSSYDTKKELLNDLQRELQDIGVRADSGAEERARIRRDELHAQLSNNRSRRNQLEKALTFCEAEMDNLTRKLRKLERDYFEMREQVVTAKAGWCAVMRMVKDNGVERRLHRRELAYLSADDLRSMSDKALGALRLAVADNEHLRDVLRMSEDPKRPERKIQFFVAVYQHLRERIRQDIIRTDDPVEAIEQMEIELSRLTEELTSREQKLAISSRSVANIIRKTIQREQNRIRMLNQGLQNVSFGQVNSVRLNVNVRETHAMLLDVLSEQHEQHQDLFNSNRLTFSEALAKLYQRLNPQIDMGQRTPQTIGEELLDYRNYLEMEVEVNRGSDGWLRAESGALSTGEAIGTGMSILVMVVQSWEDESRRLRGKDISPCRLLFLDEAARLDARSIATLFELCERLQMQLIIAAPENISPEKGTTYKLVRKVFQNTEHVHVVGLRGFAPQLPETLPGSDEAPSQAS</sequence>
<reference key="1">
    <citation type="journal article" date="2009" name="PLoS Genet.">
        <title>Organised genome dynamics in the Escherichia coli species results in highly diverse adaptive paths.</title>
        <authorList>
            <person name="Touchon M."/>
            <person name="Hoede C."/>
            <person name="Tenaillon O."/>
            <person name="Barbe V."/>
            <person name="Baeriswyl S."/>
            <person name="Bidet P."/>
            <person name="Bingen E."/>
            <person name="Bonacorsi S."/>
            <person name="Bouchier C."/>
            <person name="Bouvet O."/>
            <person name="Calteau A."/>
            <person name="Chiapello H."/>
            <person name="Clermont O."/>
            <person name="Cruveiller S."/>
            <person name="Danchin A."/>
            <person name="Diard M."/>
            <person name="Dossat C."/>
            <person name="Karoui M.E."/>
            <person name="Frapy E."/>
            <person name="Garry L."/>
            <person name="Ghigo J.M."/>
            <person name="Gilles A.M."/>
            <person name="Johnson J."/>
            <person name="Le Bouguenec C."/>
            <person name="Lescat M."/>
            <person name="Mangenot S."/>
            <person name="Martinez-Jehanne V."/>
            <person name="Matic I."/>
            <person name="Nassif X."/>
            <person name="Oztas S."/>
            <person name="Petit M.A."/>
            <person name="Pichon C."/>
            <person name="Rouy Z."/>
            <person name="Ruf C.S."/>
            <person name="Schneider D."/>
            <person name="Tourret J."/>
            <person name="Vacherie B."/>
            <person name="Vallenet D."/>
            <person name="Medigue C."/>
            <person name="Rocha E.P.C."/>
            <person name="Denamur E."/>
        </authorList>
    </citation>
    <scope>NUCLEOTIDE SEQUENCE [LARGE SCALE GENOMIC DNA]</scope>
    <source>
        <strain>S88 / ExPEC</strain>
    </source>
</reference>
<protein>
    <recommendedName>
        <fullName evidence="1">Chromosome partition protein MukB</fullName>
    </recommendedName>
    <alternativeName>
        <fullName evidence="1">Structural maintenance of chromosome-related protein</fullName>
    </alternativeName>
</protein>